<proteinExistence type="evidence at protein level"/>
<sequence length="149" mass="17011">MGIHQCTAVVLLLLCASLSTYGQPAEIRRRYEHFLTQHVYGGITEQTCDRVMRQRRITRFPTGNDCKEVNTFIQANGNHVRTVCTGGGTRQTDNRDLYMSNNQFTVITCTLRSGERHPNCRYRGKESSRKIVVACEGEWPTHYEKGVIV</sequence>
<accession>A5HAK0</accession>
<keyword id="KW-0002">3D-structure</keyword>
<keyword id="KW-0037">Angiogenesis</keyword>
<keyword id="KW-0044">Antibiotic</keyword>
<keyword id="KW-0929">Antimicrobial</keyword>
<keyword id="KW-0217">Developmental protein</keyword>
<keyword id="KW-0221">Differentiation</keyword>
<keyword id="KW-0903">Direct protein sequencing</keyword>
<keyword id="KW-1015">Disulfide bond</keyword>
<keyword id="KW-0255">Endonuclease</keyword>
<keyword id="KW-0378">Hydrolase</keyword>
<keyword id="KW-0391">Immunity</keyword>
<keyword id="KW-0540">Nuclease</keyword>
<keyword id="KW-0873">Pyrrolidone carboxylic acid</keyword>
<keyword id="KW-1185">Reference proteome</keyword>
<keyword id="KW-0964">Secreted</keyword>
<keyword id="KW-0732">Signal</keyword>
<protein>
    <recommendedName>
        <fullName evidence="8">Ribonuclease-like 3</fullName>
        <shortName evidence="10">RNase ZF-3</shortName>
        <shortName evidence="8">RNase-like 3</shortName>
        <shortName evidence="8">ZF-RNase-3</shortName>
        <ecNumber>3.1.27.-</ecNumber>
    </recommendedName>
    <alternativeName>
        <fullName evidence="9">Dr-RNase 1</fullName>
    </alternativeName>
    <component>
        <recommendedName>
            <fullName evidence="11">N-terminal peptide</fullName>
        </recommendedName>
    </component>
    <component>
        <recommendedName>
            <fullName evidence="11">LF-ZF3</fullName>
        </recommendedName>
    </component>
</protein>
<feature type="signal peptide" evidence="5">
    <location>
        <begin position="1"/>
        <end position="22"/>
    </location>
</feature>
<feature type="chain" id="PRO_0000394404" description="Ribonuclease-like 3" evidence="2">
    <location>
        <begin position="23"/>
        <end position="149"/>
    </location>
</feature>
<feature type="peptide" id="PRO_0000394405" description="N-terminal peptide" evidence="6">
    <location>
        <begin position="23"/>
        <end position="55"/>
    </location>
</feature>
<feature type="peptide" id="PRO_0000394406" description="LF-ZF3" evidence="6">
    <location>
        <begin position="56"/>
        <end position="149"/>
    </location>
</feature>
<feature type="active site" description="Proton acceptor" evidence="5">
    <location>
        <position position="38"/>
    </location>
</feature>
<feature type="active site" description="Proton donor" evidence="5">
    <location>
        <position position="142"/>
    </location>
</feature>
<feature type="binding site" evidence="5">
    <location>
        <begin position="67"/>
        <end position="71"/>
    </location>
    <ligand>
        <name>substrate</name>
    </ligand>
</feature>
<feature type="site" description="Cleavage" evidence="6">
    <location>
        <position position="55"/>
    </location>
</feature>
<feature type="modified residue" description="Pyrrolidone carboxylic acid" evidence="1">
    <location>
        <position position="23"/>
    </location>
</feature>
<feature type="disulfide bond" evidence="5">
    <location>
        <begin position="48"/>
        <end position="109"/>
    </location>
</feature>
<feature type="disulfide bond" evidence="5">
    <location>
        <begin position="66"/>
        <end position="120"/>
    </location>
</feature>
<feature type="disulfide bond" evidence="5">
    <location>
        <begin position="84"/>
        <end position="135"/>
    </location>
</feature>
<feature type="sequence variant" description="In allele ZF-3d and allele ZF-3e." evidence="5">
    <original>Q</original>
    <variation>R</variation>
    <location>
        <position position="5"/>
    </location>
</feature>
<feature type="sequence variant" description="In allele ZF-3a and allele ZF-3c." evidence="4 7">
    <original>R</original>
    <variation>G</variation>
    <location>
        <position position="56"/>
    </location>
</feature>
<feature type="sequence variant" description="In allele ZF-3c." evidence="4">
    <original>D</original>
    <variation>E</variation>
    <location>
        <position position="93"/>
    </location>
</feature>
<feature type="sequence variant" description="In allele ZF-3e." evidence="5">
    <original>N</original>
    <variation>D</variation>
    <location>
        <position position="102"/>
    </location>
</feature>
<feature type="sequence variant" description="In allele ZF-3c." evidence="4">
    <original>G</original>
    <variation>S</variation>
    <location>
        <position position="137"/>
    </location>
</feature>
<feature type="sequence variant" description="In allele ZF-3e." evidence="5">
    <original>T</original>
    <variation>A</variation>
    <location>
        <position position="141"/>
    </location>
</feature>
<feature type="sequence variant" description="In allele ZF-3d and allele ZF-3e." evidence="5">
    <original>K</original>
    <variation>R</variation>
    <location>
        <position position="145"/>
    </location>
</feature>
<feature type="sequence conflict" description="In Ref. 4; no nucleotide entry." evidence="12" ref="4">
    <original>A</original>
    <variation>M</variation>
    <location>
        <position position="25"/>
    </location>
</feature>
<feature type="helix" evidence="15">
    <location>
        <begin position="28"/>
        <end position="38"/>
    </location>
</feature>
<feature type="helix" evidence="15">
    <location>
        <begin position="48"/>
        <end position="54"/>
    </location>
</feature>
<feature type="strand" evidence="15">
    <location>
        <begin position="58"/>
        <end position="63"/>
    </location>
</feature>
<feature type="strand" evidence="15">
    <location>
        <begin position="68"/>
        <end position="75"/>
    </location>
</feature>
<feature type="helix" evidence="15">
    <location>
        <begin position="77"/>
        <end position="81"/>
    </location>
</feature>
<feature type="helix" evidence="15">
    <location>
        <begin position="82"/>
        <end position="84"/>
    </location>
</feature>
<feature type="strand" evidence="15">
    <location>
        <begin position="87"/>
        <end position="90"/>
    </location>
</feature>
<feature type="strand" evidence="15">
    <location>
        <begin position="92"/>
        <end position="94"/>
    </location>
</feature>
<feature type="strand" evidence="15">
    <location>
        <begin position="97"/>
        <end position="102"/>
    </location>
</feature>
<feature type="strand" evidence="15">
    <location>
        <begin position="104"/>
        <end position="113"/>
    </location>
</feature>
<feature type="strand" evidence="15">
    <location>
        <begin position="121"/>
        <end position="136"/>
    </location>
</feature>
<feature type="strand" evidence="15">
    <location>
        <begin position="139"/>
        <end position="147"/>
    </location>
</feature>
<dbReference type="EC" id="3.1.27.-"/>
<dbReference type="EMBL" id="EF382669">
    <property type="protein sequence ID" value="ABQ23783.1"/>
    <property type="molecule type" value="mRNA"/>
</dbReference>
<dbReference type="EMBL" id="BX465197">
    <property type="status" value="NOT_ANNOTATED_CDS"/>
    <property type="molecule type" value="Genomic_DNA"/>
</dbReference>
<dbReference type="RefSeq" id="NP_001092923.1">
    <property type="nucleotide sequence ID" value="NM_001099453.1"/>
</dbReference>
<dbReference type="PDB" id="2VQ9">
    <property type="method" value="X-ray"/>
    <property type="resolution" value="1.85 A"/>
    <property type="chains" value="A=23-149"/>
</dbReference>
<dbReference type="PDBsum" id="2VQ9"/>
<dbReference type="SMR" id="A5HAK0"/>
<dbReference type="FunCoup" id="A5HAK0">
    <property type="interactions" value="1801"/>
</dbReference>
<dbReference type="STRING" id="7955.ENSDARP00000123763"/>
<dbReference type="PaxDb" id="7955-ENSDARP00000123932"/>
<dbReference type="GeneID" id="798787"/>
<dbReference type="KEGG" id="dre:798787"/>
<dbReference type="AGR" id="ZFIN:ZDB-GENE-050809-5"/>
<dbReference type="CTD" id="798787"/>
<dbReference type="ZFIN" id="ZDB-GENE-050809-5">
    <property type="gene designation" value="rnasel3"/>
</dbReference>
<dbReference type="eggNOG" id="ENOG502S9Q1">
    <property type="taxonomic scope" value="Eukaryota"/>
</dbReference>
<dbReference type="InParanoid" id="A5HAK0"/>
<dbReference type="OrthoDB" id="8573660at2759"/>
<dbReference type="PhylomeDB" id="A5HAK0"/>
<dbReference type="BRENDA" id="4.6.1.18">
    <property type="organism ID" value="928"/>
</dbReference>
<dbReference type="Reactome" id="R-DRE-418990">
    <property type="pathway name" value="Adherens junctions interactions"/>
</dbReference>
<dbReference type="Reactome" id="R-DRE-6798695">
    <property type="pathway name" value="Neutrophil degranulation"/>
</dbReference>
<dbReference type="Reactome" id="R-DRE-6803157">
    <property type="pathway name" value="Antimicrobial peptides"/>
</dbReference>
<dbReference type="EvolutionaryTrace" id="A5HAK0"/>
<dbReference type="PRO" id="PR:A5HAK0"/>
<dbReference type="Proteomes" id="UP000000437">
    <property type="component" value="Alternate scaffold 14"/>
</dbReference>
<dbReference type="Proteomes" id="UP000000437">
    <property type="component" value="Chromosome 14"/>
</dbReference>
<dbReference type="GO" id="GO:0005576">
    <property type="term" value="C:extracellular region"/>
    <property type="evidence" value="ECO:0007669"/>
    <property type="project" value="UniProtKB-SubCell"/>
</dbReference>
<dbReference type="GO" id="GO:0004519">
    <property type="term" value="F:endonuclease activity"/>
    <property type="evidence" value="ECO:0007669"/>
    <property type="project" value="UniProtKB-KW"/>
</dbReference>
<dbReference type="GO" id="GO:0003723">
    <property type="term" value="F:RNA binding"/>
    <property type="evidence" value="ECO:0000305"/>
    <property type="project" value="ZFIN"/>
</dbReference>
<dbReference type="GO" id="GO:0004540">
    <property type="term" value="F:RNA nuclease activity"/>
    <property type="evidence" value="ECO:0000314"/>
    <property type="project" value="ZFIN"/>
</dbReference>
<dbReference type="GO" id="GO:0001525">
    <property type="term" value="P:angiogenesis"/>
    <property type="evidence" value="ECO:0000318"/>
    <property type="project" value="GO_Central"/>
</dbReference>
<dbReference type="GO" id="GO:0030154">
    <property type="term" value="P:cell differentiation"/>
    <property type="evidence" value="ECO:0007669"/>
    <property type="project" value="UniProtKB-KW"/>
</dbReference>
<dbReference type="GO" id="GO:0050829">
    <property type="term" value="P:defense response to Gram-negative bacterium"/>
    <property type="evidence" value="ECO:0000314"/>
    <property type="project" value="ZFIN"/>
</dbReference>
<dbReference type="GO" id="GO:0050830">
    <property type="term" value="P:defense response to Gram-positive bacterium"/>
    <property type="evidence" value="ECO:0000314"/>
    <property type="project" value="ZFIN"/>
</dbReference>
<dbReference type="GO" id="GO:0002376">
    <property type="term" value="P:immune system process"/>
    <property type="evidence" value="ECO:0007669"/>
    <property type="project" value="UniProtKB-KW"/>
</dbReference>
<dbReference type="CDD" id="cd06265">
    <property type="entry name" value="RNase_A_canonical"/>
    <property type="match status" value="1"/>
</dbReference>
<dbReference type="FunFam" id="3.10.130.10:FF:000005">
    <property type="entry name" value="Ribonuclease-like 3"/>
    <property type="match status" value="1"/>
</dbReference>
<dbReference type="Gene3D" id="3.10.130.10">
    <property type="entry name" value="Ribonuclease A-like domain"/>
    <property type="match status" value="1"/>
</dbReference>
<dbReference type="InterPro" id="IPR001427">
    <property type="entry name" value="RNaseA"/>
</dbReference>
<dbReference type="InterPro" id="IPR036816">
    <property type="entry name" value="RNaseA-like_dom_sf"/>
</dbReference>
<dbReference type="InterPro" id="IPR023411">
    <property type="entry name" value="RNaseA_AS"/>
</dbReference>
<dbReference type="InterPro" id="IPR023412">
    <property type="entry name" value="RNaseA_domain"/>
</dbReference>
<dbReference type="PANTHER" id="PTHR11437:SF10">
    <property type="entry name" value="ANGIOGENIN-RELATED"/>
    <property type="match status" value="1"/>
</dbReference>
<dbReference type="PANTHER" id="PTHR11437">
    <property type="entry name" value="RIBONUCLEASE"/>
    <property type="match status" value="1"/>
</dbReference>
<dbReference type="Pfam" id="PF00074">
    <property type="entry name" value="RnaseA"/>
    <property type="match status" value="1"/>
</dbReference>
<dbReference type="PRINTS" id="PR00794">
    <property type="entry name" value="RIBONUCLEASE"/>
</dbReference>
<dbReference type="SMART" id="SM00092">
    <property type="entry name" value="RNAse_Pc"/>
    <property type="match status" value="1"/>
</dbReference>
<dbReference type="SUPFAM" id="SSF54076">
    <property type="entry name" value="RNase A-like"/>
    <property type="match status" value="1"/>
</dbReference>
<dbReference type="PROSITE" id="PS00127">
    <property type="entry name" value="RNASE_PANCREATIC"/>
    <property type="match status" value="1"/>
</dbReference>
<gene>
    <name evidence="14" type="primary">rnasel3</name>
</gene>
<organism>
    <name type="scientific">Danio rerio</name>
    <name type="common">Zebrafish</name>
    <name type="synonym">Brachydanio rerio</name>
    <dbReference type="NCBI Taxonomy" id="7955"/>
    <lineage>
        <taxon>Eukaryota</taxon>
        <taxon>Metazoa</taxon>
        <taxon>Chordata</taxon>
        <taxon>Craniata</taxon>
        <taxon>Vertebrata</taxon>
        <taxon>Euteleostomi</taxon>
        <taxon>Actinopterygii</taxon>
        <taxon>Neopterygii</taxon>
        <taxon>Teleostei</taxon>
        <taxon>Ostariophysi</taxon>
        <taxon>Cypriniformes</taxon>
        <taxon>Danionidae</taxon>
        <taxon>Danioninae</taxon>
        <taxon>Danio</taxon>
    </lineage>
</organism>
<evidence type="ECO:0000250" key="1">
    <source>
        <dbReference type="UniProtKB" id="P34096"/>
    </source>
</evidence>
<evidence type="ECO:0000255" key="2"/>
<evidence type="ECO:0000269" key="3">
    <source>
    </source>
</evidence>
<evidence type="ECO:0000269" key="4">
    <source>
    </source>
</evidence>
<evidence type="ECO:0000269" key="5">
    <source>
    </source>
</evidence>
<evidence type="ECO:0000269" key="6">
    <source>
    </source>
</evidence>
<evidence type="ECO:0000269" key="7">
    <source>
    </source>
</evidence>
<evidence type="ECO:0000303" key="8">
    <source>
    </source>
</evidence>
<evidence type="ECO:0000303" key="9">
    <source>
    </source>
</evidence>
<evidence type="ECO:0000303" key="10">
    <source>
    </source>
</evidence>
<evidence type="ECO:0000303" key="11">
    <source>
    </source>
</evidence>
<evidence type="ECO:0000305" key="12"/>
<evidence type="ECO:0000312" key="13">
    <source>
        <dbReference type="EMBL" id="ABQ23783.1"/>
    </source>
</evidence>
<evidence type="ECO:0000312" key="14">
    <source>
        <dbReference type="ZFIN" id="ZDB-GENE-050809-5"/>
    </source>
</evidence>
<evidence type="ECO:0007829" key="15">
    <source>
        <dbReference type="PDB" id="2VQ9"/>
    </source>
</evidence>
<comment type="function">
    <text evidence="3 4 5 6">Ribonuclease. Angiogenic. Plays a role in host defense. Exhibits strong antibacterial activity against Gram-negative bacteria but mild antibacterial activity against Gram-positive bacteria. The RNase activity is not required for the bactericidal activity.</text>
</comment>
<comment type="subcellular location">
    <subcellularLocation>
        <location evidence="1">Secreted</location>
    </subcellularLocation>
</comment>
<comment type="tissue specificity">
    <text evidence="4">Strongly expressed in the adult liver and gut, and weakly in the heart and testis.</text>
</comment>
<comment type="developmental stage">
    <text evidence="4">Only expressed in adults.</text>
</comment>
<comment type="PTM">
    <text evidence="6">Cleavage between Arg-55 and Arg-56 is catalyzed by a membrane-localized Gram-negative bacterium protease (OmpT in E.coli). The excised fragment is then transported to the bacterium cytosol for cleavage of the disulfide bridge linking Cys-48 and Cys-109, thus separating the N-terminal and LF-ZF3. LF-ZF3 but not the N-terminal peptide possesses bactericidal activity.</text>
</comment>
<comment type="miscellaneous">
    <text evidence="6">Although the OmpT protease is absent in Gram-positive bacteria, LF-ZF3 generated by a Gram-negative bacterium can penetrate a Gram-positive bacterium and exert its cytotoxicity.</text>
</comment>
<comment type="similarity">
    <text evidence="2">Belongs to the pancreatic ribonuclease family.</text>
</comment>
<reference evidence="12 13" key="1">
    <citation type="journal article" date="2007" name="Mol. Biol. Evol.">
        <title>Zebrafish ribonucleases are bactericidal: implications for the origin of the vertebrate RNase A superfamily.</title>
        <authorList>
            <person name="Cho S."/>
            <person name="Zhang J."/>
        </authorList>
    </citation>
    <scope>NUCLEOTIDE SEQUENCE [MRNA] (ALLELE ZF-3C)</scope>
    <scope>FUNCTION</scope>
    <scope>TISSUE SPECIFICITY</scope>
    <scope>DEVELOPMENTAL STAGE</scope>
    <scope>VARIANTS GLY-56; GLU-93 AND SER-137</scope>
    <source>
        <strain evidence="4">AB</strain>
    </source>
</reference>
<reference evidence="12" key="2">
    <citation type="journal article" date="2008" name="J. Mol. Biol.">
        <title>Ribonuclease A homologues of the zebrafish: polymorphism, crystal structures of two representatives and their evolutionary implications.</title>
        <authorList>
            <person name="Kazakou K."/>
            <person name="Holloway D.E."/>
            <person name="Prior S.H."/>
            <person name="Subramanian V."/>
            <person name="Acharya K.R."/>
        </authorList>
    </citation>
    <scope>NUCLEOTIDE SEQUENCE [MRNA] (ALLELES ZF-3D AND ZF-3E)</scope>
    <scope>FUNCTION</scope>
    <scope>X-RAY CRYSTALLOGRAPHY (1.85 ANGSTROMS) OF 23-149 (ALLELE ZF-3E)</scope>
    <scope>VARIANTS ARG-5; ASP-102; ALA-141 AND ARG-145</scope>
</reference>
<reference key="3">
    <citation type="journal article" date="2013" name="Nature">
        <title>The zebrafish reference genome sequence and its relationship to the human genome.</title>
        <authorList>
            <person name="Howe K."/>
            <person name="Clark M.D."/>
            <person name="Torroja C.F."/>
            <person name="Torrance J."/>
            <person name="Berthelot C."/>
            <person name="Muffato M."/>
            <person name="Collins J.E."/>
            <person name="Humphray S."/>
            <person name="McLaren K."/>
            <person name="Matthews L."/>
            <person name="McLaren S."/>
            <person name="Sealy I."/>
            <person name="Caccamo M."/>
            <person name="Churcher C."/>
            <person name="Scott C."/>
            <person name="Barrett J.C."/>
            <person name="Koch R."/>
            <person name="Rauch G.J."/>
            <person name="White S."/>
            <person name="Chow W."/>
            <person name="Kilian B."/>
            <person name="Quintais L.T."/>
            <person name="Guerra-Assuncao J.A."/>
            <person name="Zhou Y."/>
            <person name="Gu Y."/>
            <person name="Yen J."/>
            <person name="Vogel J.H."/>
            <person name="Eyre T."/>
            <person name="Redmond S."/>
            <person name="Banerjee R."/>
            <person name="Chi J."/>
            <person name="Fu B."/>
            <person name="Langley E."/>
            <person name="Maguire S.F."/>
            <person name="Laird G.K."/>
            <person name="Lloyd D."/>
            <person name="Kenyon E."/>
            <person name="Donaldson S."/>
            <person name="Sehra H."/>
            <person name="Almeida-King J."/>
            <person name="Loveland J."/>
            <person name="Trevanion S."/>
            <person name="Jones M."/>
            <person name="Quail M."/>
            <person name="Willey D."/>
            <person name="Hunt A."/>
            <person name="Burton J."/>
            <person name="Sims S."/>
            <person name="McLay K."/>
            <person name="Plumb B."/>
            <person name="Davis J."/>
            <person name="Clee C."/>
            <person name="Oliver K."/>
            <person name="Clark R."/>
            <person name="Riddle C."/>
            <person name="Elliot D."/>
            <person name="Threadgold G."/>
            <person name="Harden G."/>
            <person name="Ware D."/>
            <person name="Begum S."/>
            <person name="Mortimore B."/>
            <person name="Kerry G."/>
            <person name="Heath P."/>
            <person name="Phillimore B."/>
            <person name="Tracey A."/>
            <person name="Corby N."/>
            <person name="Dunn M."/>
            <person name="Johnson C."/>
            <person name="Wood J."/>
            <person name="Clark S."/>
            <person name="Pelan S."/>
            <person name="Griffiths G."/>
            <person name="Smith M."/>
            <person name="Glithero R."/>
            <person name="Howden P."/>
            <person name="Barker N."/>
            <person name="Lloyd C."/>
            <person name="Stevens C."/>
            <person name="Harley J."/>
            <person name="Holt K."/>
            <person name="Panagiotidis G."/>
            <person name="Lovell J."/>
            <person name="Beasley H."/>
            <person name="Henderson C."/>
            <person name="Gordon D."/>
            <person name="Auger K."/>
            <person name="Wright D."/>
            <person name="Collins J."/>
            <person name="Raisen C."/>
            <person name="Dyer L."/>
            <person name="Leung K."/>
            <person name="Robertson L."/>
            <person name="Ambridge K."/>
            <person name="Leongamornlert D."/>
            <person name="McGuire S."/>
            <person name="Gilderthorp R."/>
            <person name="Griffiths C."/>
            <person name="Manthravadi D."/>
            <person name="Nichol S."/>
            <person name="Barker G."/>
            <person name="Whitehead S."/>
            <person name="Kay M."/>
            <person name="Brown J."/>
            <person name="Murnane C."/>
            <person name="Gray E."/>
            <person name="Humphries M."/>
            <person name="Sycamore N."/>
            <person name="Barker D."/>
            <person name="Saunders D."/>
            <person name="Wallis J."/>
            <person name="Babbage A."/>
            <person name="Hammond S."/>
            <person name="Mashreghi-Mohammadi M."/>
            <person name="Barr L."/>
            <person name="Martin S."/>
            <person name="Wray P."/>
            <person name="Ellington A."/>
            <person name="Matthews N."/>
            <person name="Ellwood M."/>
            <person name="Woodmansey R."/>
            <person name="Clark G."/>
            <person name="Cooper J."/>
            <person name="Tromans A."/>
            <person name="Grafham D."/>
            <person name="Skuce C."/>
            <person name="Pandian R."/>
            <person name="Andrews R."/>
            <person name="Harrison E."/>
            <person name="Kimberley A."/>
            <person name="Garnett J."/>
            <person name="Fosker N."/>
            <person name="Hall R."/>
            <person name="Garner P."/>
            <person name="Kelly D."/>
            <person name="Bird C."/>
            <person name="Palmer S."/>
            <person name="Gehring I."/>
            <person name="Berger A."/>
            <person name="Dooley C.M."/>
            <person name="Ersan-Urun Z."/>
            <person name="Eser C."/>
            <person name="Geiger H."/>
            <person name="Geisler M."/>
            <person name="Karotki L."/>
            <person name="Kirn A."/>
            <person name="Konantz J."/>
            <person name="Konantz M."/>
            <person name="Oberlander M."/>
            <person name="Rudolph-Geiger S."/>
            <person name="Teucke M."/>
            <person name="Lanz C."/>
            <person name="Raddatz G."/>
            <person name="Osoegawa K."/>
            <person name="Zhu B."/>
            <person name="Rapp A."/>
            <person name="Widaa S."/>
            <person name="Langford C."/>
            <person name="Yang F."/>
            <person name="Schuster S.C."/>
            <person name="Carter N.P."/>
            <person name="Harrow J."/>
            <person name="Ning Z."/>
            <person name="Herrero J."/>
            <person name="Searle S.M."/>
            <person name="Enright A."/>
            <person name="Geisler R."/>
            <person name="Plasterk R.H."/>
            <person name="Lee C."/>
            <person name="Westerfield M."/>
            <person name="de Jong P.J."/>
            <person name="Zon L.I."/>
            <person name="Postlethwait J.H."/>
            <person name="Nusslein-Volhard C."/>
            <person name="Hubbard T.J."/>
            <person name="Roest Crollius H."/>
            <person name="Rogers J."/>
            <person name="Stemple D.L."/>
        </authorList>
    </citation>
    <scope>NUCLEOTIDE SEQUENCE [LARGE SCALE GENOMIC DNA] (ALLELE ZF-3A)</scope>
    <scope>VARIANT GLY-56</scope>
    <source>
        <strain>Tuebingen</strain>
    </source>
</reference>
<reference evidence="12" key="4">
    <citation type="journal article" date="2006" name="J. Biol. Chem.">
        <title>Ribonucleases and angiogenins from fish.</title>
        <authorList>
            <person name="Pizzo E."/>
            <person name="Buonanno P."/>
            <person name="Di Maro A."/>
            <person name="Ponticelli S."/>
            <person name="De Falco S."/>
            <person name="Quarto N."/>
            <person name="Cubellis M.V."/>
            <person name="D'Alessio G."/>
        </authorList>
    </citation>
    <scope>NUCLEOTIDE SEQUENCE [MRNA] OF 25-148 (ALLELE ZF-3B)</scope>
    <scope>FUNCTION</scope>
</reference>
<reference evidence="12" key="5">
    <citation type="journal article" date="2010" name="FEBS J.">
        <title>The bactericidal action on Escherichia coli of ZF-RNase-3 is triggered by the suicidal action of the bacterium OmpT protease.</title>
        <authorList>
            <person name="Zanfardino A."/>
            <person name="Pizzo E."/>
            <person name="Di Maro A."/>
            <person name="Varcamonti M."/>
            <person name="D'Alessio G."/>
        </authorList>
    </citation>
    <scope>PROTEIN SEQUENCE OF 56-63 (ALLELE ZF-3B)</scope>
    <scope>FUNCTION</scope>
    <scope>PROTEOLYTIC CLEAVAGE AT ARG-55</scope>
</reference>
<reference evidence="12" key="6">
    <citation type="journal article" date="2007" name="Gene">
        <title>The success of the RNase scaffold in the advance of biosciences and in evolution.</title>
        <authorList>
            <person name="Pizzo E."/>
            <person name="D'Alessio G."/>
        </authorList>
    </citation>
    <scope>REVIEW</scope>
</reference>
<name>RNSL3_DANRE</name>